<protein>
    <recommendedName>
        <fullName evidence="1">Large ribosomal subunit protein uL24</fullName>
    </recommendedName>
    <alternativeName>
        <fullName evidence="2">50S ribosomal protein L24</fullName>
    </alternativeName>
</protein>
<dbReference type="EMBL" id="CP000266">
    <property type="protein sequence ID" value="ABF05372.1"/>
    <property type="molecule type" value="Genomic_DNA"/>
</dbReference>
<dbReference type="RefSeq" id="WP_000729185.1">
    <property type="nucleotide sequence ID" value="NC_008258.1"/>
</dbReference>
<dbReference type="SMR" id="Q0SZZ3"/>
<dbReference type="GeneID" id="93778678"/>
<dbReference type="KEGG" id="sfv:SFV_3329"/>
<dbReference type="HOGENOM" id="CLU_093315_2_2_6"/>
<dbReference type="Proteomes" id="UP000000659">
    <property type="component" value="Chromosome"/>
</dbReference>
<dbReference type="GO" id="GO:0005829">
    <property type="term" value="C:cytosol"/>
    <property type="evidence" value="ECO:0007669"/>
    <property type="project" value="UniProtKB-ARBA"/>
</dbReference>
<dbReference type="GO" id="GO:1990904">
    <property type="term" value="C:ribonucleoprotein complex"/>
    <property type="evidence" value="ECO:0007669"/>
    <property type="project" value="UniProtKB-KW"/>
</dbReference>
<dbReference type="GO" id="GO:0005840">
    <property type="term" value="C:ribosome"/>
    <property type="evidence" value="ECO:0007669"/>
    <property type="project" value="UniProtKB-KW"/>
</dbReference>
<dbReference type="GO" id="GO:0019843">
    <property type="term" value="F:rRNA binding"/>
    <property type="evidence" value="ECO:0007669"/>
    <property type="project" value="UniProtKB-UniRule"/>
</dbReference>
<dbReference type="GO" id="GO:0003735">
    <property type="term" value="F:structural constituent of ribosome"/>
    <property type="evidence" value="ECO:0007669"/>
    <property type="project" value="InterPro"/>
</dbReference>
<dbReference type="GO" id="GO:0006412">
    <property type="term" value="P:translation"/>
    <property type="evidence" value="ECO:0007669"/>
    <property type="project" value="UniProtKB-UniRule"/>
</dbReference>
<dbReference type="CDD" id="cd06089">
    <property type="entry name" value="KOW_RPL26"/>
    <property type="match status" value="1"/>
</dbReference>
<dbReference type="FunFam" id="2.30.30.30:FF:000004">
    <property type="entry name" value="50S ribosomal protein L24"/>
    <property type="match status" value="1"/>
</dbReference>
<dbReference type="Gene3D" id="2.30.30.30">
    <property type="match status" value="1"/>
</dbReference>
<dbReference type="HAMAP" id="MF_01326_B">
    <property type="entry name" value="Ribosomal_uL24_B"/>
    <property type="match status" value="1"/>
</dbReference>
<dbReference type="InterPro" id="IPR005824">
    <property type="entry name" value="KOW"/>
</dbReference>
<dbReference type="InterPro" id="IPR014722">
    <property type="entry name" value="Rib_uL2_dom2"/>
</dbReference>
<dbReference type="InterPro" id="IPR003256">
    <property type="entry name" value="Ribosomal_uL24"/>
</dbReference>
<dbReference type="InterPro" id="IPR005825">
    <property type="entry name" value="Ribosomal_uL24_CS"/>
</dbReference>
<dbReference type="InterPro" id="IPR041988">
    <property type="entry name" value="Ribosomal_uL24_KOW"/>
</dbReference>
<dbReference type="InterPro" id="IPR008991">
    <property type="entry name" value="Translation_prot_SH3-like_sf"/>
</dbReference>
<dbReference type="NCBIfam" id="TIGR01079">
    <property type="entry name" value="rplX_bact"/>
    <property type="match status" value="1"/>
</dbReference>
<dbReference type="PANTHER" id="PTHR12903">
    <property type="entry name" value="MITOCHONDRIAL RIBOSOMAL PROTEIN L24"/>
    <property type="match status" value="1"/>
</dbReference>
<dbReference type="Pfam" id="PF00467">
    <property type="entry name" value="KOW"/>
    <property type="match status" value="1"/>
</dbReference>
<dbReference type="Pfam" id="PF17136">
    <property type="entry name" value="ribosomal_L24"/>
    <property type="match status" value="1"/>
</dbReference>
<dbReference type="SMART" id="SM00739">
    <property type="entry name" value="KOW"/>
    <property type="match status" value="1"/>
</dbReference>
<dbReference type="SUPFAM" id="SSF50104">
    <property type="entry name" value="Translation proteins SH3-like domain"/>
    <property type="match status" value="1"/>
</dbReference>
<dbReference type="PROSITE" id="PS01108">
    <property type="entry name" value="RIBOSOMAL_L24"/>
    <property type="match status" value="1"/>
</dbReference>
<organism>
    <name type="scientific">Shigella flexneri serotype 5b (strain 8401)</name>
    <dbReference type="NCBI Taxonomy" id="373384"/>
    <lineage>
        <taxon>Bacteria</taxon>
        <taxon>Pseudomonadati</taxon>
        <taxon>Pseudomonadota</taxon>
        <taxon>Gammaproteobacteria</taxon>
        <taxon>Enterobacterales</taxon>
        <taxon>Enterobacteriaceae</taxon>
        <taxon>Shigella</taxon>
    </lineage>
</organism>
<accession>Q0SZZ3</accession>
<keyword id="KW-0687">Ribonucleoprotein</keyword>
<keyword id="KW-0689">Ribosomal protein</keyword>
<keyword id="KW-0694">RNA-binding</keyword>
<keyword id="KW-0699">rRNA-binding</keyword>
<comment type="function">
    <text evidence="1">One of two assembly initiator proteins, it binds directly to the 5'-end of the 23S rRNA, where it nucleates assembly of the 50S subunit.</text>
</comment>
<comment type="function">
    <text evidence="1">One of the proteins that surrounds the polypeptide exit tunnel on the outside of the subunit.</text>
</comment>
<comment type="subunit">
    <text evidence="1">Part of the 50S ribosomal subunit.</text>
</comment>
<comment type="similarity">
    <text evidence="1">Belongs to the universal ribosomal protein uL24 family.</text>
</comment>
<sequence>MAAKIRRDDEVIVLTGKDKGKRGKVKNVLSSGKVIVEGINLVKKHQKPVPALNQPGGIVEKEAAIQVSNVAIFNAATGKADRVGFRFEDGKKVRFFKSNSETIK</sequence>
<feature type="chain" id="PRO_1000052313" description="Large ribosomal subunit protein uL24">
    <location>
        <begin position="1"/>
        <end position="104"/>
    </location>
</feature>
<evidence type="ECO:0000255" key="1">
    <source>
        <dbReference type="HAMAP-Rule" id="MF_01326"/>
    </source>
</evidence>
<evidence type="ECO:0000305" key="2"/>
<gene>
    <name evidence="1" type="primary">rplX</name>
    <name type="ordered locus">SFV_3329</name>
</gene>
<name>RL24_SHIF8</name>
<reference key="1">
    <citation type="journal article" date="2006" name="BMC Genomics">
        <title>Complete genome sequence of Shigella flexneri 5b and comparison with Shigella flexneri 2a.</title>
        <authorList>
            <person name="Nie H."/>
            <person name="Yang F."/>
            <person name="Zhang X."/>
            <person name="Yang J."/>
            <person name="Chen L."/>
            <person name="Wang J."/>
            <person name="Xiong Z."/>
            <person name="Peng J."/>
            <person name="Sun L."/>
            <person name="Dong J."/>
            <person name="Xue Y."/>
            <person name="Xu X."/>
            <person name="Chen S."/>
            <person name="Yao Z."/>
            <person name="Shen Y."/>
            <person name="Jin Q."/>
        </authorList>
    </citation>
    <scope>NUCLEOTIDE SEQUENCE [LARGE SCALE GENOMIC DNA]</scope>
    <source>
        <strain>8401</strain>
    </source>
</reference>
<proteinExistence type="inferred from homology"/>